<gene>
    <name evidence="1" type="primary">rps8e</name>
    <name type="ordered locus">Mhun_2485</name>
</gene>
<accession>Q2FU12</accession>
<proteinExistence type="inferred from homology"/>
<sequence length="125" mass="13956">MQWQGRSVRKSTGGRYSPSRGKRRREIGSAPAETHIGIDRRKISRTYGGNNKVRALRCEYAAISNAKTGETKKVKIETVEENAANPNYVRRNLLTRGAIIRTELGRARITSRPGQHGVINAVLIE</sequence>
<protein>
    <recommendedName>
        <fullName evidence="1">Small ribosomal subunit protein eS8</fullName>
    </recommendedName>
    <alternativeName>
        <fullName evidence="3">30S ribosomal protein S8e</fullName>
    </alternativeName>
</protein>
<evidence type="ECO:0000255" key="1">
    <source>
        <dbReference type="HAMAP-Rule" id="MF_00029"/>
    </source>
</evidence>
<evidence type="ECO:0000256" key="2">
    <source>
        <dbReference type="SAM" id="MobiDB-lite"/>
    </source>
</evidence>
<evidence type="ECO:0000305" key="3"/>
<feature type="chain" id="PRO_0000304176" description="Small ribosomal subunit protein eS8">
    <location>
        <begin position="1"/>
        <end position="125"/>
    </location>
</feature>
<feature type="region of interest" description="Disordered" evidence="2">
    <location>
        <begin position="1"/>
        <end position="34"/>
    </location>
</feature>
<dbReference type="EMBL" id="CP000254">
    <property type="protein sequence ID" value="ABD42185.1"/>
    <property type="molecule type" value="Genomic_DNA"/>
</dbReference>
<dbReference type="RefSeq" id="WP_011449443.1">
    <property type="nucleotide sequence ID" value="NC_007796.1"/>
</dbReference>
<dbReference type="SMR" id="Q2FU12"/>
<dbReference type="FunCoup" id="Q2FU12">
    <property type="interactions" value="122"/>
</dbReference>
<dbReference type="STRING" id="323259.Mhun_2485"/>
<dbReference type="EnsemblBacteria" id="ABD42185">
    <property type="protein sequence ID" value="ABD42185"/>
    <property type="gene ID" value="Mhun_2485"/>
</dbReference>
<dbReference type="GeneID" id="3924474"/>
<dbReference type="KEGG" id="mhu:Mhun_2485"/>
<dbReference type="eggNOG" id="arCOG04154">
    <property type="taxonomic scope" value="Archaea"/>
</dbReference>
<dbReference type="HOGENOM" id="CLU_080597_2_1_2"/>
<dbReference type="InParanoid" id="Q2FU12"/>
<dbReference type="OrthoDB" id="372305at2157"/>
<dbReference type="Proteomes" id="UP000001941">
    <property type="component" value="Chromosome"/>
</dbReference>
<dbReference type="GO" id="GO:1990904">
    <property type="term" value="C:ribonucleoprotein complex"/>
    <property type="evidence" value="ECO:0007669"/>
    <property type="project" value="UniProtKB-KW"/>
</dbReference>
<dbReference type="GO" id="GO:0005840">
    <property type="term" value="C:ribosome"/>
    <property type="evidence" value="ECO:0007669"/>
    <property type="project" value="UniProtKB-KW"/>
</dbReference>
<dbReference type="GO" id="GO:0003735">
    <property type="term" value="F:structural constituent of ribosome"/>
    <property type="evidence" value="ECO:0007669"/>
    <property type="project" value="InterPro"/>
</dbReference>
<dbReference type="GO" id="GO:0006412">
    <property type="term" value="P:translation"/>
    <property type="evidence" value="ECO:0007669"/>
    <property type="project" value="UniProtKB-UniRule"/>
</dbReference>
<dbReference type="CDD" id="cd11382">
    <property type="entry name" value="Ribosomal_S8e"/>
    <property type="match status" value="1"/>
</dbReference>
<dbReference type="Gene3D" id="3.10.290.70">
    <property type="match status" value="1"/>
</dbReference>
<dbReference type="HAMAP" id="MF_00029">
    <property type="entry name" value="Ribosomal_eS8"/>
    <property type="match status" value="1"/>
</dbReference>
<dbReference type="InterPro" id="IPR001047">
    <property type="entry name" value="Ribosomal_eS8"/>
</dbReference>
<dbReference type="InterPro" id="IPR018283">
    <property type="entry name" value="Ribosomal_eS8_CS"/>
</dbReference>
<dbReference type="InterPro" id="IPR020919">
    <property type="entry name" value="Ribosomal_protein_eS8_arc"/>
</dbReference>
<dbReference type="InterPro" id="IPR022309">
    <property type="entry name" value="Ribosomal_Se8/biogenesis_NSA2"/>
</dbReference>
<dbReference type="NCBIfam" id="TIGR00307">
    <property type="entry name" value="eS8"/>
    <property type="match status" value="1"/>
</dbReference>
<dbReference type="PANTHER" id="PTHR10394">
    <property type="entry name" value="40S RIBOSOMAL PROTEIN S8"/>
    <property type="match status" value="1"/>
</dbReference>
<dbReference type="Pfam" id="PF01201">
    <property type="entry name" value="Ribosomal_S8e"/>
    <property type="match status" value="1"/>
</dbReference>
<dbReference type="PROSITE" id="PS01193">
    <property type="entry name" value="RIBOSOMAL_S8E"/>
    <property type="match status" value="1"/>
</dbReference>
<organism>
    <name type="scientific">Methanospirillum hungatei JF-1 (strain ATCC 27890 / DSM 864 / NBRC 100397 / JF-1)</name>
    <dbReference type="NCBI Taxonomy" id="323259"/>
    <lineage>
        <taxon>Archaea</taxon>
        <taxon>Methanobacteriati</taxon>
        <taxon>Methanobacteriota</taxon>
        <taxon>Stenosarchaea group</taxon>
        <taxon>Methanomicrobia</taxon>
        <taxon>Methanomicrobiales</taxon>
        <taxon>Methanospirillaceae</taxon>
        <taxon>Methanospirillum</taxon>
    </lineage>
</organism>
<keyword id="KW-1185">Reference proteome</keyword>
<keyword id="KW-0687">Ribonucleoprotein</keyword>
<keyword id="KW-0689">Ribosomal protein</keyword>
<comment type="subunit">
    <text evidence="1">Part of the 30S ribosomal subunit.</text>
</comment>
<comment type="similarity">
    <text evidence="1">Belongs to the eukaryotic ribosomal protein eS8 family.</text>
</comment>
<name>RS8E_METHJ</name>
<reference key="1">
    <citation type="journal article" date="2016" name="Stand. Genomic Sci.">
        <title>Complete genome sequence of Methanospirillum hungatei type strain JF1.</title>
        <authorList>
            <person name="Gunsalus R.P."/>
            <person name="Cook L.E."/>
            <person name="Crable B."/>
            <person name="Rohlin L."/>
            <person name="McDonald E."/>
            <person name="Mouttaki H."/>
            <person name="Sieber J.R."/>
            <person name="Poweleit N."/>
            <person name="Zhou H."/>
            <person name="Lapidus A.L."/>
            <person name="Daligault H.E."/>
            <person name="Land M."/>
            <person name="Gilna P."/>
            <person name="Ivanova N."/>
            <person name="Kyrpides N."/>
            <person name="Culley D.E."/>
            <person name="McInerney M.J."/>
        </authorList>
    </citation>
    <scope>NUCLEOTIDE SEQUENCE [LARGE SCALE GENOMIC DNA]</scope>
    <source>
        <strain>ATCC 27890 / DSM 864 / NBRC 100397 / JF-1</strain>
    </source>
</reference>